<accession>Q6KCJ3</accession>
<reference key="1">
    <citation type="submission" date="2004-01" db="EMBL/GenBank/DDBJ databases">
        <title>Taxonomic re-evaluation of the genus Enterococcus.</title>
        <authorList>
            <person name="Torriani S."/>
            <person name="Felis G.E."/>
            <person name="Knijff E."/>
            <person name="Girelli D."/>
            <person name="Castioni A."/>
            <person name="Dellaglio F."/>
        </authorList>
    </citation>
    <scope>NUCLEOTIDE SEQUENCE [GENOMIC DNA]</scope>
    <source>
        <strain>CCUG 18656</strain>
    </source>
</reference>
<name>RECA_ENTMU</name>
<keyword id="KW-0067">ATP-binding</keyword>
<keyword id="KW-0963">Cytoplasm</keyword>
<keyword id="KW-0227">DNA damage</keyword>
<keyword id="KW-0233">DNA recombination</keyword>
<keyword id="KW-0234">DNA repair</keyword>
<keyword id="KW-0238">DNA-binding</keyword>
<keyword id="KW-0547">Nucleotide-binding</keyword>
<keyword id="KW-0742">SOS response</keyword>
<protein>
    <recommendedName>
        <fullName evidence="1">Protein RecA</fullName>
    </recommendedName>
    <alternativeName>
        <fullName evidence="1">Recombinase A</fullName>
    </alternativeName>
</protein>
<sequence>MADDRKAALDAALKKIEKNYGKGSIMKLGEKIDQQISTIPSGSLALDVALGIGGYPRGRIIEVYGPESSGKTTVALHAIAEVQKNGGTAAFIDAEHALDPQYAQKLGVNIDELLLSQPDTGEQGLEIADALVSSGAVDIVVIDSVAALVPRAEIDGEMGDSHVGLQARLMSQALRKLSGSINKTKTIAIFINQIREKVGVMFGNPEITPGGRALKFYATIRLEVRRAEQLKQGTDIVGNRTKIKVVKNKVAPPFKIAEVDVMYGLGISQEGELLDMAVEKDIVDKSGAWYSYKEDRIGQGRENAKIYMSNHPEMMAEVSTLVRAAYGIGEPVDVPQEAQEELPLDE</sequence>
<feature type="chain" id="PRO_0000122713" description="Protein RecA">
    <location>
        <begin position="1"/>
        <end position="346"/>
    </location>
</feature>
<feature type="binding site" evidence="1">
    <location>
        <begin position="65"/>
        <end position="72"/>
    </location>
    <ligand>
        <name>ATP</name>
        <dbReference type="ChEBI" id="CHEBI:30616"/>
    </ligand>
</feature>
<organism>
    <name type="scientific">Enterococcus mundtii</name>
    <dbReference type="NCBI Taxonomy" id="53346"/>
    <lineage>
        <taxon>Bacteria</taxon>
        <taxon>Bacillati</taxon>
        <taxon>Bacillota</taxon>
        <taxon>Bacilli</taxon>
        <taxon>Lactobacillales</taxon>
        <taxon>Enterococcaceae</taxon>
        <taxon>Enterococcus</taxon>
    </lineage>
</organism>
<evidence type="ECO:0000255" key="1">
    <source>
        <dbReference type="HAMAP-Rule" id="MF_00268"/>
    </source>
</evidence>
<dbReference type="EMBL" id="AJ621710">
    <property type="protein sequence ID" value="CAF21835.1"/>
    <property type="molecule type" value="Genomic_DNA"/>
</dbReference>
<dbReference type="SMR" id="Q6KCJ3"/>
<dbReference type="STRING" id="53346.A5802_002919"/>
<dbReference type="GO" id="GO:0005829">
    <property type="term" value="C:cytosol"/>
    <property type="evidence" value="ECO:0007669"/>
    <property type="project" value="TreeGrafter"/>
</dbReference>
<dbReference type="GO" id="GO:0005524">
    <property type="term" value="F:ATP binding"/>
    <property type="evidence" value="ECO:0007669"/>
    <property type="project" value="UniProtKB-UniRule"/>
</dbReference>
<dbReference type="GO" id="GO:0016887">
    <property type="term" value="F:ATP hydrolysis activity"/>
    <property type="evidence" value="ECO:0007669"/>
    <property type="project" value="InterPro"/>
</dbReference>
<dbReference type="GO" id="GO:0140664">
    <property type="term" value="F:ATP-dependent DNA damage sensor activity"/>
    <property type="evidence" value="ECO:0007669"/>
    <property type="project" value="InterPro"/>
</dbReference>
<dbReference type="GO" id="GO:0003684">
    <property type="term" value="F:damaged DNA binding"/>
    <property type="evidence" value="ECO:0007669"/>
    <property type="project" value="UniProtKB-UniRule"/>
</dbReference>
<dbReference type="GO" id="GO:0003697">
    <property type="term" value="F:single-stranded DNA binding"/>
    <property type="evidence" value="ECO:0007669"/>
    <property type="project" value="UniProtKB-UniRule"/>
</dbReference>
<dbReference type="GO" id="GO:0006310">
    <property type="term" value="P:DNA recombination"/>
    <property type="evidence" value="ECO:0007669"/>
    <property type="project" value="UniProtKB-UniRule"/>
</dbReference>
<dbReference type="GO" id="GO:0006281">
    <property type="term" value="P:DNA repair"/>
    <property type="evidence" value="ECO:0007669"/>
    <property type="project" value="UniProtKB-UniRule"/>
</dbReference>
<dbReference type="GO" id="GO:0009432">
    <property type="term" value="P:SOS response"/>
    <property type="evidence" value="ECO:0007669"/>
    <property type="project" value="UniProtKB-UniRule"/>
</dbReference>
<dbReference type="CDD" id="cd00983">
    <property type="entry name" value="RecA"/>
    <property type="match status" value="1"/>
</dbReference>
<dbReference type="FunFam" id="3.40.50.300:FF:000087">
    <property type="entry name" value="Recombinase RecA"/>
    <property type="match status" value="1"/>
</dbReference>
<dbReference type="Gene3D" id="3.40.50.300">
    <property type="entry name" value="P-loop containing nucleotide triphosphate hydrolases"/>
    <property type="match status" value="1"/>
</dbReference>
<dbReference type="HAMAP" id="MF_00268">
    <property type="entry name" value="RecA"/>
    <property type="match status" value="1"/>
</dbReference>
<dbReference type="InterPro" id="IPR003593">
    <property type="entry name" value="AAA+_ATPase"/>
</dbReference>
<dbReference type="InterPro" id="IPR013765">
    <property type="entry name" value="DNA_recomb/repair_RecA"/>
</dbReference>
<dbReference type="InterPro" id="IPR020584">
    <property type="entry name" value="DNA_recomb/repair_RecA_CS"/>
</dbReference>
<dbReference type="InterPro" id="IPR027417">
    <property type="entry name" value="P-loop_NTPase"/>
</dbReference>
<dbReference type="InterPro" id="IPR049261">
    <property type="entry name" value="RecA-like_C"/>
</dbReference>
<dbReference type="InterPro" id="IPR049428">
    <property type="entry name" value="RecA-like_N"/>
</dbReference>
<dbReference type="InterPro" id="IPR020588">
    <property type="entry name" value="RecA_ATP-bd"/>
</dbReference>
<dbReference type="InterPro" id="IPR023400">
    <property type="entry name" value="RecA_C_sf"/>
</dbReference>
<dbReference type="InterPro" id="IPR020587">
    <property type="entry name" value="RecA_monomer-monomer_interface"/>
</dbReference>
<dbReference type="NCBIfam" id="TIGR02012">
    <property type="entry name" value="tigrfam_recA"/>
    <property type="match status" value="1"/>
</dbReference>
<dbReference type="PANTHER" id="PTHR45900:SF1">
    <property type="entry name" value="MITOCHONDRIAL DNA REPAIR PROTEIN RECA HOMOLOG-RELATED"/>
    <property type="match status" value="1"/>
</dbReference>
<dbReference type="PANTHER" id="PTHR45900">
    <property type="entry name" value="RECA"/>
    <property type="match status" value="1"/>
</dbReference>
<dbReference type="Pfam" id="PF00154">
    <property type="entry name" value="RecA"/>
    <property type="match status" value="1"/>
</dbReference>
<dbReference type="Pfam" id="PF21096">
    <property type="entry name" value="RecA_C"/>
    <property type="match status" value="1"/>
</dbReference>
<dbReference type="PRINTS" id="PR00142">
    <property type="entry name" value="RECA"/>
</dbReference>
<dbReference type="SMART" id="SM00382">
    <property type="entry name" value="AAA"/>
    <property type="match status" value="1"/>
</dbReference>
<dbReference type="SUPFAM" id="SSF52540">
    <property type="entry name" value="P-loop containing nucleoside triphosphate hydrolases"/>
    <property type="match status" value="1"/>
</dbReference>
<dbReference type="SUPFAM" id="SSF54752">
    <property type="entry name" value="RecA protein, C-terminal domain"/>
    <property type="match status" value="1"/>
</dbReference>
<dbReference type="PROSITE" id="PS00321">
    <property type="entry name" value="RECA_1"/>
    <property type="match status" value="1"/>
</dbReference>
<dbReference type="PROSITE" id="PS50162">
    <property type="entry name" value="RECA_2"/>
    <property type="match status" value="1"/>
</dbReference>
<dbReference type="PROSITE" id="PS50163">
    <property type="entry name" value="RECA_3"/>
    <property type="match status" value="1"/>
</dbReference>
<comment type="function">
    <text evidence="1">Can catalyze the hydrolysis of ATP in the presence of single-stranded DNA, the ATP-dependent uptake of single-stranded DNA by duplex DNA, and the ATP-dependent hybridization of homologous single-stranded DNAs. It interacts with LexA causing its activation and leading to its autocatalytic cleavage.</text>
</comment>
<comment type="subcellular location">
    <subcellularLocation>
        <location evidence="1">Cytoplasm</location>
    </subcellularLocation>
</comment>
<comment type="similarity">
    <text evidence="1">Belongs to the RecA family.</text>
</comment>
<gene>
    <name evidence="1" type="primary">recA</name>
</gene>
<proteinExistence type="inferred from homology"/>